<sequence length="270" mass="29801">MTRIIVVTSGKGGVGKTTSSAALATGFAKKGKKTVVIDFDIGLRNLDLIMGCERRVVYDFINVINGEAILNQALIKDKRTEGLFILPASQTRNKNALTKSGIDRVFTQLVNMNFDIIICDSPAGIESGAVLAIYFSDEAIVITNPEVSSVRDSDRILGIIASTSQRSSQNFKPIKEHLLLTRYNPKRVSNGDMLSTEDVLDILRIPLIGVIPEDTSVLKASNQGTPVILNYNSNAGQAYYDTVNRLLGINCPFRFVKDEKKSFLRRLFRR</sequence>
<evidence type="ECO:0000250" key="1"/>
<evidence type="ECO:0000250" key="2">
    <source>
        <dbReference type="UniProtKB" id="Q72H90"/>
    </source>
</evidence>
<evidence type="ECO:0000305" key="3"/>
<dbReference type="EMBL" id="AE016826">
    <property type="protein sequence ID" value="AAO27028.1"/>
    <property type="molecule type" value="Genomic_DNA"/>
</dbReference>
<dbReference type="RefSeq" id="WP_011091429.1">
    <property type="nucleotide sequence ID" value="NC_004545.1"/>
</dbReference>
<dbReference type="SMR" id="Q89AI3"/>
<dbReference type="STRING" id="224915.bbp_303"/>
<dbReference type="KEGG" id="bab:bbp_303"/>
<dbReference type="eggNOG" id="COG2894">
    <property type="taxonomic scope" value="Bacteria"/>
</dbReference>
<dbReference type="HOGENOM" id="CLU_037612_0_1_6"/>
<dbReference type="OrthoDB" id="9773088at2"/>
<dbReference type="Proteomes" id="UP000000601">
    <property type="component" value="Chromosome"/>
</dbReference>
<dbReference type="GO" id="GO:0009898">
    <property type="term" value="C:cytoplasmic side of plasma membrane"/>
    <property type="evidence" value="ECO:0007669"/>
    <property type="project" value="TreeGrafter"/>
</dbReference>
<dbReference type="GO" id="GO:0005829">
    <property type="term" value="C:cytosol"/>
    <property type="evidence" value="ECO:0007669"/>
    <property type="project" value="TreeGrafter"/>
</dbReference>
<dbReference type="GO" id="GO:0005524">
    <property type="term" value="F:ATP binding"/>
    <property type="evidence" value="ECO:0007669"/>
    <property type="project" value="UniProtKB-KW"/>
</dbReference>
<dbReference type="GO" id="GO:0016887">
    <property type="term" value="F:ATP hydrolysis activity"/>
    <property type="evidence" value="ECO:0007669"/>
    <property type="project" value="InterPro"/>
</dbReference>
<dbReference type="GO" id="GO:0000917">
    <property type="term" value="P:division septum assembly"/>
    <property type="evidence" value="ECO:0007669"/>
    <property type="project" value="UniProtKB-KW"/>
</dbReference>
<dbReference type="GO" id="GO:0051782">
    <property type="term" value="P:negative regulation of cell division"/>
    <property type="evidence" value="ECO:0007669"/>
    <property type="project" value="TreeGrafter"/>
</dbReference>
<dbReference type="CDD" id="cd02036">
    <property type="entry name" value="MinD"/>
    <property type="match status" value="1"/>
</dbReference>
<dbReference type="FunFam" id="3.40.50.300:FF:000068">
    <property type="entry name" value="Site-determining protein"/>
    <property type="match status" value="1"/>
</dbReference>
<dbReference type="Gene3D" id="3.40.50.300">
    <property type="entry name" value="P-loop containing nucleotide triphosphate hydrolases"/>
    <property type="match status" value="1"/>
</dbReference>
<dbReference type="InterPro" id="IPR002586">
    <property type="entry name" value="CobQ/CobB/MinD/ParA_Nub-bd_dom"/>
</dbReference>
<dbReference type="InterPro" id="IPR010223">
    <property type="entry name" value="MinD"/>
</dbReference>
<dbReference type="InterPro" id="IPR025501">
    <property type="entry name" value="MinD_FleN"/>
</dbReference>
<dbReference type="InterPro" id="IPR027417">
    <property type="entry name" value="P-loop_NTPase"/>
</dbReference>
<dbReference type="InterPro" id="IPR050625">
    <property type="entry name" value="ParA/MinD_ATPase"/>
</dbReference>
<dbReference type="NCBIfam" id="TIGR01968">
    <property type="entry name" value="minD_bact"/>
    <property type="match status" value="1"/>
</dbReference>
<dbReference type="PANTHER" id="PTHR43384:SF6">
    <property type="entry name" value="SEPTUM SITE-DETERMINING PROTEIN MIND HOMOLOG, CHLOROPLASTIC"/>
    <property type="match status" value="1"/>
</dbReference>
<dbReference type="PANTHER" id="PTHR43384">
    <property type="entry name" value="SEPTUM SITE-DETERMINING PROTEIN MIND HOMOLOG, CHLOROPLASTIC-RELATED"/>
    <property type="match status" value="1"/>
</dbReference>
<dbReference type="Pfam" id="PF01656">
    <property type="entry name" value="CbiA"/>
    <property type="match status" value="1"/>
</dbReference>
<dbReference type="PIRSF" id="PIRSF003092">
    <property type="entry name" value="MinD"/>
    <property type="match status" value="1"/>
</dbReference>
<dbReference type="SUPFAM" id="SSF52540">
    <property type="entry name" value="P-loop containing nucleoside triphosphate hydrolases"/>
    <property type="match status" value="1"/>
</dbReference>
<keyword id="KW-0067">ATP-binding</keyword>
<keyword id="KW-0131">Cell cycle</keyword>
<keyword id="KW-0132">Cell division</keyword>
<keyword id="KW-1003">Cell membrane</keyword>
<keyword id="KW-0472">Membrane</keyword>
<keyword id="KW-0547">Nucleotide-binding</keyword>
<keyword id="KW-1185">Reference proteome</keyword>
<keyword id="KW-0717">Septation</keyword>
<reference key="1">
    <citation type="journal article" date="2003" name="Proc. Natl. Acad. Sci. U.S.A.">
        <title>Reductive genome evolution in Buchnera aphidicola.</title>
        <authorList>
            <person name="van Ham R.C.H.J."/>
            <person name="Kamerbeek J."/>
            <person name="Palacios C."/>
            <person name="Rausell C."/>
            <person name="Abascal F."/>
            <person name="Bastolla U."/>
            <person name="Fernandez J.M."/>
            <person name="Jimenez L."/>
            <person name="Postigo M."/>
            <person name="Silva F.J."/>
            <person name="Tamames J."/>
            <person name="Viguera E."/>
            <person name="Latorre A."/>
            <person name="Valencia A."/>
            <person name="Moran F."/>
            <person name="Moya A."/>
        </authorList>
    </citation>
    <scope>NUCLEOTIDE SEQUENCE [LARGE SCALE GENOMIC DNA]</scope>
    <source>
        <strain>Bp</strain>
    </source>
</reference>
<accession>Q89AI3</accession>
<organism>
    <name type="scientific">Buchnera aphidicola subsp. Baizongia pistaciae (strain Bp)</name>
    <dbReference type="NCBI Taxonomy" id="224915"/>
    <lineage>
        <taxon>Bacteria</taxon>
        <taxon>Pseudomonadati</taxon>
        <taxon>Pseudomonadota</taxon>
        <taxon>Gammaproteobacteria</taxon>
        <taxon>Enterobacterales</taxon>
        <taxon>Erwiniaceae</taxon>
        <taxon>Buchnera</taxon>
    </lineage>
</organism>
<gene>
    <name type="primary">minD</name>
    <name type="ordered locus">bbp_303</name>
</gene>
<name>MIND_BUCBP</name>
<comment type="function">
    <text evidence="1">ATPase required for the correct placement of the division site. Cell division inhibitors MinC and MinD act in concert to form an inhibitor capable of blocking formation of the polar Z ring septums. Rapidly oscillates between the poles of the cell to destabilize FtsZ filaments that have formed before they mature into polar Z rings (By similarity).</text>
</comment>
<comment type="subunit">
    <text evidence="1">Interacts with MinC and FtsZ.</text>
</comment>
<comment type="subcellular location">
    <subcellularLocation>
        <location evidence="1">Cell membrane</location>
        <topology evidence="1">Peripheral membrane protein</topology>
    </subcellularLocation>
</comment>
<comment type="similarity">
    <text evidence="3">Belongs to the ParA family. MinD subfamily.</text>
</comment>
<proteinExistence type="inferred from homology"/>
<feature type="initiator methionine" description="Removed" evidence="1">
    <location>
        <position position="1"/>
    </location>
</feature>
<feature type="chain" id="PRO_0000201967" description="Septum site-determining protein MinD">
    <location>
        <begin position="2"/>
        <end position="270"/>
    </location>
</feature>
<feature type="binding site" evidence="2">
    <location>
        <begin position="11"/>
        <end position="18"/>
    </location>
    <ligand>
        <name>ATP</name>
        <dbReference type="ChEBI" id="CHEBI:30616"/>
    </ligand>
</feature>
<protein>
    <recommendedName>
        <fullName>Septum site-determining protein MinD</fullName>
    </recommendedName>
    <alternativeName>
        <fullName>Cell division inhibitor MinD</fullName>
    </alternativeName>
</protein>